<name>ARNC_KLEP7</name>
<proteinExistence type="inferred from homology"/>
<keyword id="KW-0046">Antibiotic resistance</keyword>
<keyword id="KW-0997">Cell inner membrane</keyword>
<keyword id="KW-1003">Cell membrane</keyword>
<keyword id="KW-0328">Glycosyltransferase</keyword>
<keyword id="KW-0441">Lipid A biosynthesis</keyword>
<keyword id="KW-0444">Lipid biosynthesis</keyword>
<keyword id="KW-0443">Lipid metabolism</keyword>
<keyword id="KW-0448">Lipopolysaccharide biosynthesis</keyword>
<keyword id="KW-0472">Membrane</keyword>
<keyword id="KW-0808">Transferase</keyword>
<keyword id="KW-0812">Transmembrane</keyword>
<keyword id="KW-1133">Transmembrane helix</keyword>
<evidence type="ECO:0000255" key="1">
    <source>
        <dbReference type="HAMAP-Rule" id="MF_01164"/>
    </source>
</evidence>
<accession>A6TF99</accession>
<gene>
    <name evidence="1" type="primary">arnC</name>
    <name type="ordered locus">KPN78578_38090</name>
    <name type="ORF">KPN_03846</name>
</gene>
<feature type="chain" id="PRO_1000065655" description="Undecaprenyl-phosphate 4-deoxy-4-formamido-L-arabinose transferase">
    <location>
        <begin position="1"/>
        <end position="327"/>
    </location>
</feature>
<feature type="transmembrane region" description="Helical" evidence="1">
    <location>
        <begin position="236"/>
        <end position="256"/>
    </location>
</feature>
<feature type="transmembrane region" description="Helical" evidence="1">
    <location>
        <begin position="270"/>
        <end position="290"/>
    </location>
</feature>
<reference key="1">
    <citation type="submission" date="2006-09" db="EMBL/GenBank/DDBJ databases">
        <authorList>
            <consortium name="The Klebsiella pneumonia Genome Sequencing Project"/>
            <person name="McClelland M."/>
            <person name="Sanderson E.K."/>
            <person name="Spieth J."/>
            <person name="Clifton W.S."/>
            <person name="Latreille P."/>
            <person name="Sabo A."/>
            <person name="Pepin K."/>
            <person name="Bhonagiri V."/>
            <person name="Porwollik S."/>
            <person name="Ali J."/>
            <person name="Wilson R.K."/>
        </authorList>
    </citation>
    <scope>NUCLEOTIDE SEQUENCE [LARGE SCALE GENOMIC DNA]</scope>
    <source>
        <strain>ATCC 700721 / MGH 78578</strain>
    </source>
</reference>
<dbReference type="EC" id="2.4.2.53" evidence="1"/>
<dbReference type="EMBL" id="CP000647">
    <property type="protein sequence ID" value="ABR79233.1"/>
    <property type="molecule type" value="Genomic_DNA"/>
</dbReference>
<dbReference type="RefSeq" id="WP_002921035.1">
    <property type="nucleotide sequence ID" value="NC_009648.1"/>
</dbReference>
<dbReference type="SMR" id="A6TF99"/>
<dbReference type="STRING" id="272620.KPN_03846"/>
<dbReference type="CAZy" id="GT2">
    <property type="family name" value="Glycosyltransferase Family 2"/>
</dbReference>
<dbReference type="jPOST" id="A6TF99"/>
<dbReference type="PaxDb" id="272620-KPN_03846"/>
<dbReference type="EnsemblBacteria" id="ABR79233">
    <property type="protein sequence ID" value="ABR79233"/>
    <property type="gene ID" value="KPN_03846"/>
</dbReference>
<dbReference type="GeneID" id="69753010"/>
<dbReference type="KEGG" id="kpn:KPN_03846"/>
<dbReference type="HOGENOM" id="CLU_033536_0_0_6"/>
<dbReference type="UniPathway" id="UPA00030"/>
<dbReference type="UniPathway" id="UPA00036">
    <property type="reaction ID" value="UER00495"/>
</dbReference>
<dbReference type="PHI-base" id="PHI:7950"/>
<dbReference type="Proteomes" id="UP000000265">
    <property type="component" value="Chromosome"/>
</dbReference>
<dbReference type="GO" id="GO:0005886">
    <property type="term" value="C:plasma membrane"/>
    <property type="evidence" value="ECO:0007669"/>
    <property type="project" value="UniProtKB-SubCell"/>
</dbReference>
<dbReference type="GO" id="GO:0016780">
    <property type="term" value="F:phosphotransferase activity, for other substituted phosphate groups"/>
    <property type="evidence" value="ECO:0007669"/>
    <property type="project" value="UniProtKB-UniRule"/>
</dbReference>
<dbReference type="GO" id="GO:0099621">
    <property type="term" value="F:undecaprenyl-phosphate 4-deoxy-4-formamido-L-arabinose transferase activity"/>
    <property type="evidence" value="ECO:0007669"/>
    <property type="project" value="UniProtKB-EC"/>
</dbReference>
<dbReference type="GO" id="GO:0036108">
    <property type="term" value="P:4-amino-4-deoxy-alpha-L-arabinopyranosyl undecaprenyl phosphate biosynthetic process"/>
    <property type="evidence" value="ECO:0007669"/>
    <property type="project" value="UniProtKB-UniRule"/>
</dbReference>
<dbReference type="GO" id="GO:0009245">
    <property type="term" value="P:lipid A biosynthetic process"/>
    <property type="evidence" value="ECO:0007669"/>
    <property type="project" value="UniProtKB-UniRule"/>
</dbReference>
<dbReference type="GO" id="GO:0009103">
    <property type="term" value="P:lipopolysaccharide biosynthetic process"/>
    <property type="evidence" value="ECO:0007669"/>
    <property type="project" value="UniProtKB-UniRule"/>
</dbReference>
<dbReference type="GO" id="GO:0046677">
    <property type="term" value="P:response to antibiotic"/>
    <property type="evidence" value="ECO:0007669"/>
    <property type="project" value="UniProtKB-KW"/>
</dbReference>
<dbReference type="CDD" id="cd04187">
    <property type="entry name" value="DPM1_like_bac"/>
    <property type="match status" value="1"/>
</dbReference>
<dbReference type="FunFam" id="3.90.550.10:FF:000019">
    <property type="entry name" value="Undecaprenyl-phosphate 4-deoxy-4-formamido-L-arabinose transferase"/>
    <property type="match status" value="1"/>
</dbReference>
<dbReference type="Gene3D" id="3.90.550.10">
    <property type="entry name" value="Spore Coat Polysaccharide Biosynthesis Protein SpsA, Chain A"/>
    <property type="match status" value="1"/>
</dbReference>
<dbReference type="HAMAP" id="MF_01164">
    <property type="entry name" value="ArnC_transfer"/>
    <property type="match status" value="1"/>
</dbReference>
<dbReference type="InterPro" id="IPR022857">
    <property type="entry name" value="ArnC_tfrase"/>
</dbReference>
<dbReference type="InterPro" id="IPR001173">
    <property type="entry name" value="Glyco_trans_2-like"/>
</dbReference>
<dbReference type="InterPro" id="IPR050256">
    <property type="entry name" value="Glycosyltransferase_2"/>
</dbReference>
<dbReference type="InterPro" id="IPR029044">
    <property type="entry name" value="Nucleotide-diphossugar_trans"/>
</dbReference>
<dbReference type="NCBIfam" id="NF007986">
    <property type="entry name" value="PRK10714.1"/>
    <property type="match status" value="1"/>
</dbReference>
<dbReference type="PANTHER" id="PTHR48090:SF3">
    <property type="entry name" value="UNDECAPRENYL-PHOSPHATE 4-DEOXY-4-FORMAMIDO-L-ARABINOSE TRANSFERASE"/>
    <property type="match status" value="1"/>
</dbReference>
<dbReference type="PANTHER" id="PTHR48090">
    <property type="entry name" value="UNDECAPRENYL-PHOSPHATE 4-DEOXY-4-FORMAMIDO-L-ARABINOSE TRANSFERASE-RELATED"/>
    <property type="match status" value="1"/>
</dbReference>
<dbReference type="Pfam" id="PF00535">
    <property type="entry name" value="Glycos_transf_2"/>
    <property type="match status" value="1"/>
</dbReference>
<dbReference type="SUPFAM" id="SSF53448">
    <property type="entry name" value="Nucleotide-diphospho-sugar transferases"/>
    <property type="match status" value="1"/>
</dbReference>
<protein>
    <recommendedName>
        <fullName evidence="1">Undecaprenyl-phosphate 4-deoxy-4-formamido-L-arabinose transferase</fullName>
        <ecNumber evidence="1">2.4.2.53</ecNumber>
    </recommendedName>
    <alternativeName>
        <fullName evidence="1">Undecaprenyl-phosphate Ara4FN transferase</fullName>
        <shortName evidence="1">Ara4FN transferase</shortName>
    </alternativeName>
</protein>
<comment type="function">
    <text evidence="1">Catalyzes the transfer of 4-deoxy-4-formamido-L-arabinose from UDP to undecaprenyl phosphate. The modified arabinose is attached to lipid A and is required for resistance to polymyxin and cationic antimicrobial peptides.</text>
</comment>
<comment type="catalytic activity">
    <reaction evidence="1">
        <text>UDP-4-deoxy-4-formamido-beta-L-arabinose + di-trans,octa-cis-undecaprenyl phosphate = 4-deoxy-4-formamido-alpha-L-arabinopyranosyl di-trans,octa-cis-undecaprenyl phosphate + UDP</text>
        <dbReference type="Rhea" id="RHEA:27722"/>
        <dbReference type="ChEBI" id="CHEBI:58223"/>
        <dbReference type="ChEBI" id="CHEBI:58709"/>
        <dbReference type="ChEBI" id="CHEBI:58909"/>
        <dbReference type="ChEBI" id="CHEBI:60392"/>
        <dbReference type="EC" id="2.4.2.53"/>
    </reaction>
</comment>
<comment type="pathway">
    <text evidence="1">Glycolipid biosynthesis; 4-amino-4-deoxy-alpha-L-arabinose undecaprenyl phosphate biosynthesis; 4-amino-4-deoxy-alpha-L-arabinose undecaprenyl phosphate from UDP-4-deoxy-4-formamido-beta-L-arabinose and undecaprenyl phosphate: step 1/2.</text>
</comment>
<comment type="pathway">
    <text evidence="1">Bacterial outer membrane biogenesis; lipopolysaccharide biosynthesis.</text>
</comment>
<comment type="subcellular location">
    <subcellularLocation>
        <location evidence="1">Cell inner membrane</location>
        <topology evidence="1">Multi-pass membrane protein</topology>
    </subcellularLocation>
</comment>
<comment type="similarity">
    <text evidence="1">Belongs to the glycosyltransferase 2 family.</text>
</comment>
<organism>
    <name type="scientific">Klebsiella pneumoniae subsp. pneumoniae (strain ATCC 700721 / MGH 78578)</name>
    <dbReference type="NCBI Taxonomy" id="272620"/>
    <lineage>
        <taxon>Bacteria</taxon>
        <taxon>Pseudomonadati</taxon>
        <taxon>Pseudomonadota</taxon>
        <taxon>Gammaproteobacteria</taxon>
        <taxon>Enterobacterales</taxon>
        <taxon>Enterobacteriaceae</taxon>
        <taxon>Klebsiella/Raoultella group</taxon>
        <taxon>Klebsiella</taxon>
        <taxon>Klebsiella pneumoniae complex</taxon>
    </lineage>
</organism>
<sequence length="327" mass="36694">MLTYPPVKKVSVVIPVYNEQDSLPELLRRTDAACATLGRQYEILLIDDGSSDDSARMLTEAAEAEGSHVVAVLLNRNYGQHSAIMAGFSHVTGDLIITLDADLQNPPEEIPRLVAKADEGYDVVGTVRQNRQDSIFRKTASKMINRLIQRTTGKAMGDYGCMLRAYRRHIIDAMLNCHERSTFIPILANTFARRAVEIPVMHAEREFGDSKYSFMRLINLMYDLVTCLTTTPLRLLSIFGSVIALLGFAFGLLLVVLRLAFGPQWAAEGVFMLFAVLFMFIGAQFVGMGLLGEYIGRIYNDVRARPRYFIQRVVRQPETASKEEDRS</sequence>